<keyword id="KW-0227">DNA damage</keyword>
<keyword id="KW-0234">DNA repair</keyword>
<keyword id="KW-0235">DNA replication</keyword>
<keyword id="KW-0255">Endonuclease</keyword>
<keyword id="KW-0269">Exonuclease</keyword>
<keyword id="KW-0378">Hydrolase</keyword>
<keyword id="KW-0460">Magnesium</keyword>
<keyword id="KW-0479">Metal-binding</keyword>
<keyword id="KW-0540">Nuclease</keyword>
<keyword id="KW-1185">Reference proteome</keyword>
<comment type="function">
    <text evidence="1">Structure-specific nuclease with 5'-flap endonuclease and 5'-3' exonuclease activities involved in DNA replication and repair. During DNA replication, cleaves the 5'-overhanging flap structure that is generated by displacement synthesis when DNA polymerase encounters the 5'-end of a downstream Okazaki fragment. Binds the unpaired 3'-DNA end and kinks the DNA to facilitate 5' cleavage specificity. Cleaves one nucleotide into the double-stranded DNA from the junction in flap DNA, leaving a nick for ligation. Also involved in the base excision repair (BER) pathway. Acts as a genome stabilization factor that prevents flaps from equilibrating into structures that lead to duplications and deletions. Also possesses 5'-3' exonuclease activity on nicked or gapped double-stranded DNA (By similarity).</text>
</comment>
<comment type="cofactor">
    <cofactor evidence="2">
        <name>Mg(2+)</name>
        <dbReference type="ChEBI" id="CHEBI:18420"/>
    </cofactor>
    <text evidence="2">Binds 2 magnesium ions per subunit. They probably participate in the reaction catalyzed by the enzyme. May bind an additional third magnesium ion after substrate binding.</text>
</comment>
<comment type="subunit">
    <text evidence="2">Interacts with PCNA. PCNA stimulates the nuclease activity without altering cleavage specificity.</text>
</comment>
<comment type="similarity">
    <text evidence="2">Belongs to the XPG/RAD2 endonuclease family. FEN1 subfamily.</text>
</comment>
<accession>A1RWY2</accession>
<gene>
    <name evidence="2" type="primary">fen</name>
    <name type="ordered locus">Tpen_0302</name>
</gene>
<dbReference type="EC" id="3.1.-.-" evidence="2"/>
<dbReference type="EMBL" id="CP000505">
    <property type="protein sequence ID" value="ABL77712.1"/>
    <property type="molecule type" value="Genomic_DNA"/>
</dbReference>
<dbReference type="RefSeq" id="WP_011751977.1">
    <property type="nucleotide sequence ID" value="NC_008698.1"/>
</dbReference>
<dbReference type="SMR" id="A1RWY2"/>
<dbReference type="STRING" id="368408.Tpen_0302"/>
<dbReference type="EnsemblBacteria" id="ABL77712">
    <property type="protein sequence ID" value="ABL77712"/>
    <property type="gene ID" value="Tpen_0302"/>
</dbReference>
<dbReference type="GeneID" id="4601125"/>
<dbReference type="KEGG" id="tpe:Tpen_0302"/>
<dbReference type="eggNOG" id="arCOG04050">
    <property type="taxonomic scope" value="Archaea"/>
</dbReference>
<dbReference type="HOGENOM" id="CLU_032444_0_0_2"/>
<dbReference type="OrthoDB" id="9593at2157"/>
<dbReference type="Proteomes" id="UP000000641">
    <property type="component" value="Chromosome"/>
</dbReference>
<dbReference type="GO" id="GO:0008409">
    <property type="term" value="F:5'-3' exonuclease activity"/>
    <property type="evidence" value="ECO:0007669"/>
    <property type="project" value="UniProtKB-UniRule"/>
</dbReference>
<dbReference type="GO" id="GO:0017108">
    <property type="term" value="F:5'-flap endonuclease activity"/>
    <property type="evidence" value="ECO:0007669"/>
    <property type="project" value="UniProtKB-UniRule"/>
</dbReference>
<dbReference type="GO" id="GO:0003677">
    <property type="term" value="F:DNA binding"/>
    <property type="evidence" value="ECO:0007669"/>
    <property type="project" value="UniProtKB-UniRule"/>
</dbReference>
<dbReference type="GO" id="GO:0000287">
    <property type="term" value="F:magnesium ion binding"/>
    <property type="evidence" value="ECO:0007669"/>
    <property type="project" value="UniProtKB-UniRule"/>
</dbReference>
<dbReference type="GO" id="GO:0006281">
    <property type="term" value="P:DNA repair"/>
    <property type="evidence" value="ECO:0007669"/>
    <property type="project" value="UniProtKB-UniRule"/>
</dbReference>
<dbReference type="GO" id="GO:0043137">
    <property type="term" value="P:DNA replication, removal of RNA primer"/>
    <property type="evidence" value="ECO:0007669"/>
    <property type="project" value="UniProtKB-UniRule"/>
</dbReference>
<dbReference type="CDD" id="cd09897">
    <property type="entry name" value="H3TH_FEN1-XPG-like"/>
    <property type="match status" value="1"/>
</dbReference>
<dbReference type="CDD" id="cd09867">
    <property type="entry name" value="PIN_FEN1"/>
    <property type="match status" value="1"/>
</dbReference>
<dbReference type="FunFam" id="3.40.50.1010:FF:000016">
    <property type="entry name" value="Flap endonuclease 1"/>
    <property type="match status" value="1"/>
</dbReference>
<dbReference type="Gene3D" id="1.10.150.20">
    <property type="entry name" value="5' to 3' exonuclease, C-terminal subdomain"/>
    <property type="match status" value="1"/>
</dbReference>
<dbReference type="Gene3D" id="3.40.50.1010">
    <property type="entry name" value="5'-nuclease"/>
    <property type="match status" value="1"/>
</dbReference>
<dbReference type="HAMAP" id="MF_00614">
    <property type="entry name" value="Fen"/>
    <property type="match status" value="1"/>
</dbReference>
<dbReference type="InterPro" id="IPR036279">
    <property type="entry name" value="5-3_exonuclease_C_sf"/>
</dbReference>
<dbReference type="InterPro" id="IPR023426">
    <property type="entry name" value="Flap_endonuc"/>
</dbReference>
<dbReference type="InterPro" id="IPR019973">
    <property type="entry name" value="Flap_endonuc_arc"/>
</dbReference>
<dbReference type="InterPro" id="IPR008918">
    <property type="entry name" value="HhH2"/>
</dbReference>
<dbReference type="InterPro" id="IPR029060">
    <property type="entry name" value="PIN-like_dom_sf"/>
</dbReference>
<dbReference type="InterPro" id="IPR006086">
    <property type="entry name" value="XPG-I_dom"/>
</dbReference>
<dbReference type="InterPro" id="IPR006084">
    <property type="entry name" value="XPG/Rad2"/>
</dbReference>
<dbReference type="InterPro" id="IPR019974">
    <property type="entry name" value="XPG_CS"/>
</dbReference>
<dbReference type="InterPro" id="IPR006085">
    <property type="entry name" value="XPG_DNA_repair_N"/>
</dbReference>
<dbReference type="NCBIfam" id="TIGR03674">
    <property type="entry name" value="fen_arch"/>
    <property type="match status" value="1"/>
</dbReference>
<dbReference type="PANTHER" id="PTHR11081:SF9">
    <property type="entry name" value="FLAP ENDONUCLEASE 1"/>
    <property type="match status" value="1"/>
</dbReference>
<dbReference type="PANTHER" id="PTHR11081">
    <property type="entry name" value="FLAP ENDONUCLEASE FAMILY MEMBER"/>
    <property type="match status" value="1"/>
</dbReference>
<dbReference type="Pfam" id="PF00867">
    <property type="entry name" value="XPG_I"/>
    <property type="match status" value="1"/>
</dbReference>
<dbReference type="Pfam" id="PF00752">
    <property type="entry name" value="XPG_N"/>
    <property type="match status" value="1"/>
</dbReference>
<dbReference type="PRINTS" id="PR00853">
    <property type="entry name" value="XPGRADSUPER"/>
</dbReference>
<dbReference type="SMART" id="SM00279">
    <property type="entry name" value="HhH2"/>
    <property type="match status" value="1"/>
</dbReference>
<dbReference type="SMART" id="SM00484">
    <property type="entry name" value="XPGI"/>
    <property type="match status" value="1"/>
</dbReference>
<dbReference type="SMART" id="SM00485">
    <property type="entry name" value="XPGN"/>
    <property type="match status" value="1"/>
</dbReference>
<dbReference type="SUPFAM" id="SSF47807">
    <property type="entry name" value="5' to 3' exonuclease, C-terminal subdomain"/>
    <property type="match status" value="1"/>
</dbReference>
<dbReference type="SUPFAM" id="SSF88723">
    <property type="entry name" value="PIN domain-like"/>
    <property type="match status" value="1"/>
</dbReference>
<dbReference type="PROSITE" id="PS00841">
    <property type="entry name" value="XPG_1"/>
    <property type="match status" value="1"/>
</dbReference>
<sequence length="346" mass="39575">MGVDIKELVEPVAKEVELGFFSKKVIAIDAYNSLYQFLATIRQKDGTPLLDAQGNVTSHLNGLFYRTINYIELGIKPVYVFDGRPPELKQKELERRYQIKVEAEKKYREAIERGDLEEARIYAQQTSRLTAAMVHDAKLLLRYMGVPYVEAPSEGEAQAAYMVKKGDAWASGSQDFDSLLFGSPRLVRNLAITGKRKLPRKDVYVEVKPEIVELEELLRVHGITHQQLVVIGILVGTDYAPEGARGIGVKKALKLVKELKDPEKIFRSVEWSSDVPPEKILELFLHPEVTDSYELTWKEPDKEKVIELLVERHQFSMERVTNALDRLEKAVKTHFKQQSLESWFGF</sequence>
<protein>
    <recommendedName>
        <fullName evidence="2">Flap endonuclease 1</fullName>
        <shortName evidence="2">FEN-1</shortName>
        <ecNumber evidence="2">3.1.-.-</ecNumber>
    </recommendedName>
    <alternativeName>
        <fullName evidence="2">Flap structure-specific endonuclease 1</fullName>
    </alternativeName>
</protein>
<feature type="chain" id="PRO_1000061334" description="Flap endonuclease 1">
    <location>
        <begin position="1"/>
        <end position="346"/>
    </location>
</feature>
<feature type="region of interest" description="N-domain">
    <location>
        <begin position="1"/>
        <end position="100"/>
    </location>
</feature>
<feature type="region of interest" description="I-domain">
    <location>
        <begin position="118"/>
        <end position="260"/>
    </location>
</feature>
<feature type="region of interest" description="Interaction with PCNA" evidence="2">
    <location>
        <begin position="336"/>
        <end position="344"/>
    </location>
</feature>
<feature type="binding site" evidence="2">
    <location>
        <position position="29"/>
    </location>
    <ligand>
        <name>Mg(2+)</name>
        <dbReference type="ChEBI" id="CHEBI:18420"/>
        <label>1</label>
    </ligand>
</feature>
<feature type="binding site" evidence="2">
    <location>
        <position position="82"/>
    </location>
    <ligand>
        <name>Mg(2+)</name>
        <dbReference type="ChEBI" id="CHEBI:18420"/>
        <label>1</label>
    </ligand>
</feature>
<feature type="binding site" evidence="2">
    <location>
        <position position="154"/>
    </location>
    <ligand>
        <name>Mg(2+)</name>
        <dbReference type="ChEBI" id="CHEBI:18420"/>
        <label>1</label>
    </ligand>
</feature>
<feature type="binding site" evidence="2">
    <location>
        <position position="156"/>
    </location>
    <ligand>
        <name>Mg(2+)</name>
        <dbReference type="ChEBI" id="CHEBI:18420"/>
        <label>1</label>
    </ligand>
</feature>
<feature type="binding site" evidence="2">
    <location>
        <position position="175"/>
    </location>
    <ligand>
        <name>Mg(2+)</name>
        <dbReference type="ChEBI" id="CHEBI:18420"/>
        <label>2</label>
    </ligand>
</feature>
<feature type="binding site" evidence="2">
    <location>
        <position position="177"/>
    </location>
    <ligand>
        <name>Mg(2+)</name>
        <dbReference type="ChEBI" id="CHEBI:18420"/>
        <label>2</label>
    </ligand>
</feature>
<feature type="binding site" evidence="2">
    <location>
        <position position="238"/>
    </location>
    <ligand>
        <name>Mg(2+)</name>
        <dbReference type="ChEBI" id="CHEBI:18420"/>
        <label>2</label>
    </ligand>
</feature>
<proteinExistence type="inferred from homology"/>
<organism>
    <name type="scientific">Thermofilum pendens (strain DSM 2475 / Hrk 5)</name>
    <dbReference type="NCBI Taxonomy" id="368408"/>
    <lineage>
        <taxon>Archaea</taxon>
        <taxon>Thermoproteota</taxon>
        <taxon>Thermoprotei</taxon>
        <taxon>Thermofilales</taxon>
        <taxon>Thermofilaceae</taxon>
        <taxon>Thermofilum</taxon>
    </lineage>
</organism>
<name>FEN_THEPD</name>
<evidence type="ECO:0000250" key="1"/>
<evidence type="ECO:0000255" key="2">
    <source>
        <dbReference type="HAMAP-Rule" id="MF_00614"/>
    </source>
</evidence>
<reference key="1">
    <citation type="journal article" date="2008" name="J. Bacteriol.">
        <title>Genome sequence of Thermofilum pendens reveals an exceptional loss of biosynthetic pathways without genome reduction.</title>
        <authorList>
            <person name="Anderson I."/>
            <person name="Rodriguez J."/>
            <person name="Susanti D."/>
            <person name="Porat I."/>
            <person name="Reich C."/>
            <person name="Ulrich L.E."/>
            <person name="Elkins J.G."/>
            <person name="Mavromatis K."/>
            <person name="Lykidis A."/>
            <person name="Kim E."/>
            <person name="Thompson L.S."/>
            <person name="Nolan M."/>
            <person name="Land M."/>
            <person name="Copeland A."/>
            <person name="Lapidus A."/>
            <person name="Lucas S."/>
            <person name="Detter C."/>
            <person name="Zhulin I.B."/>
            <person name="Olsen G.J."/>
            <person name="Whitman W."/>
            <person name="Mukhopadhyay B."/>
            <person name="Bristow J."/>
            <person name="Kyrpides N."/>
        </authorList>
    </citation>
    <scope>NUCLEOTIDE SEQUENCE [LARGE SCALE GENOMIC DNA]</scope>
    <source>
        <strain>DSM 2475 / Hrk 5</strain>
    </source>
</reference>